<keyword id="KW-0028">Amino-acid biosynthesis</keyword>
<keyword id="KW-0963">Cytoplasm</keyword>
<keyword id="KW-0521">NADP</keyword>
<keyword id="KW-0560">Oxidoreductase</keyword>
<keyword id="KW-0641">Proline biosynthesis</keyword>
<keyword id="KW-1185">Reference proteome</keyword>
<reference key="1">
    <citation type="journal article" date="2003" name="Science">
        <title>A genomic view of the human-Bacteroides thetaiotaomicron symbiosis.</title>
        <authorList>
            <person name="Xu J."/>
            <person name="Bjursell M.K."/>
            <person name="Himrod J."/>
            <person name="Deng S."/>
            <person name="Carmichael L.K."/>
            <person name="Chiang H.C."/>
            <person name="Hooper L.V."/>
            <person name="Gordon J.I."/>
        </authorList>
    </citation>
    <scope>NUCLEOTIDE SEQUENCE [LARGE SCALE GENOMIC DNA]</scope>
    <source>
        <strain>ATCC 29148 / DSM 2079 / JCM 5827 / CCUG 10774 / NCTC 10582 / VPI-5482 / E50</strain>
    </source>
</reference>
<comment type="function">
    <text evidence="1">Catalyzes the NADPH-dependent reduction of L-glutamate 5-phosphate into L-glutamate 5-semialdehyde and phosphate. The product spontaneously undergoes cyclization to form 1-pyrroline-5-carboxylate.</text>
</comment>
<comment type="catalytic activity">
    <reaction evidence="1">
        <text>L-glutamate 5-semialdehyde + phosphate + NADP(+) = L-glutamyl 5-phosphate + NADPH + H(+)</text>
        <dbReference type="Rhea" id="RHEA:19541"/>
        <dbReference type="ChEBI" id="CHEBI:15378"/>
        <dbReference type="ChEBI" id="CHEBI:43474"/>
        <dbReference type="ChEBI" id="CHEBI:57783"/>
        <dbReference type="ChEBI" id="CHEBI:58066"/>
        <dbReference type="ChEBI" id="CHEBI:58274"/>
        <dbReference type="ChEBI" id="CHEBI:58349"/>
        <dbReference type="EC" id="1.2.1.41"/>
    </reaction>
</comment>
<comment type="pathway">
    <text evidence="1">Amino-acid biosynthesis; L-proline biosynthesis; L-glutamate 5-semialdehyde from L-glutamate: step 2/2.</text>
</comment>
<comment type="subcellular location">
    <subcellularLocation>
        <location evidence="1">Cytoplasm</location>
    </subcellularLocation>
</comment>
<comment type="similarity">
    <text evidence="1">Belongs to the gamma-glutamyl phosphate reductase family.</text>
</comment>
<organism>
    <name type="scientific">Bacteroides thetaiotaomicron (strain ATCC 29148 / DSM 2079 / JCM 5827 / CCUG 10774 / NCTC 10582 / VPI-5482 / E50)</name>
    <dbReference type="NCBI Taxonomy" id="226186"/>
    <lineage>
        <taxon>Bacteria</taxon>
        <taxon>Pseudomonadati</taxon>
        <taxon>Bacteroidota</taxon>
        <taxon>Bacteroidia</taxon>
        <taxon>Bacteroidales</taxon>
        <taxon>Bacteroidaceae</taxon>
        <taxon>Bacteroides</taxon>
    </lineage>
</organism>
<name>PROA_BACTN</name>
<accession>Q8A1E8</accession>
<evidence type="ECO:0000255" key="1">
    <source>
        <dbReference type="HAMAP-Rule" id="MF_00412"/>
    </source>
</evidence>
<sequence>MTTNLNGTFAAVQAASRELALLSDDTINQILNAVADATIAETSFILSENEKDLARMDKSNPKYDRLKLTEERLKGIAADTRNVATLPSPLGRILKETSRPNGMKLTKVSVPFGVIGIIYEARPNVSFDVFSLCLKSGNACILKGGSDADDSNRAIISVIHKVLEKFHVNPHIVELLPADREATAALLNATGYVDLIIPRGSSNLINFVRENARIPVIETGAGICHTYFDEFGDTRKGADIIHNAKTRRVSVCNALDCTIIHEKRLGDLPALCDQLKESKVTIYADTQAYQALEGYYPAELLQPATPESFGTEFLDYKMAVKTVKSFEDALGHIQENSSRHSECIVTENKERATLFTKIVDAACVYTNVSTAFTDGAQFGLGAEIGISTQKLHARGPMGLEEITSYKWVIEGDGQTRW</sequence>
<dbReference type="EC" id="1.2.1.41" evidence="1"/>
<dbReference type="EMBL" id="AE015928">
    <property type="protein sequence ID" value="AAO78823.1"/>
    <property type="molecule type" value="Genomic_DNA"/>
</dbReference>
<dbReference type="RefSeq" id="NP_812629.1">
    <property type="nucleotide sequence ID" value="NC_004663.1"/>
</dbReference>
<dbReference type="RefSeq" id="WP_011108943.1">
    <property type="nucleotide sequence ID" value="NC_004663.1"/>
</dbReference>
<dbReference type="SMR" id="Q8A1E8"/>
<dbReference type="FunCoup" id="Q8A1E8">
    <property type="interactions" value="429"/>
</dbReference>
<dbReference type="STRING" id="226186.BT_3718"/>
<dbReference type="PaxDb" id="226186-BT_3718"/>
<dbReference type="EnsemblBacteria" id="AAO78823">
    <property type="protein sequence ID" value="AAO78823"/>
    <property type="gene ID" value="BT_3718"/>
</dbReference>
<dbReference type="GeneID" id="60924887"/>
<dbReference type="KEGG" id="bth:BT_3718"/>
<dbReference type="PATRIC" id="fig|226186.12.peg.3779"/>
<dbReference type="eggNOG" id="COG0014">
    <property type="taxonomic scope" value="Bacteria"/>
</dbReference>
<dbReference type="HOGENOM" id="CLU_030231_0_0_10"/>
<dbReference type="InParanoid" id="Q8A1E8"/>
<dbReference type="OrthoDB" id="9809970at2"/>
<dbReference type="UniPathway" id="UPA00098">
    <property type="reaction ID" value="UER00360"/>
</dbReference>
<dbReference type="Proteomes" id="UP000001414">
    <property type="component" value="Chromosome"/>
</dbReference>
<dbReference type="GO" id="GO:0005737">
    <property type="term" value="C:cytoplasm"/>
    <property type="evidence" value="ECO:0007669"/>
    <property type="project" value="UniProtKB-SubCell"/>
</dbReference>
<dbReference type="GO" id="GO:0004350">
    <property type="term" value="F:glutamate-5-semialdehyde dehydrogenase activity"/>
    <property type="evidence" value="ECO:0000318"/>
    <property type="project" value="GO_Central"/>
</dbReference>
<dbReference type="GO" id="GO:0050661">
    <property type="term" value="F:NADP binding"/>
    <property type="evidence" value="ECO:0007669"/>
    <property type="project" value="InterPro"/>
</dbReference>
<dbReference type="GO" id="GO:0055129">
    <property type="term" value="P:L-proline biosynthetic process"/>
    <property type="evidence" value="ECO:0007669"/>
    <property type="project" value="UniProtKB-UniRule"/>
</dbReference>
<dbReference type="CDD" id="cd07079">
    <property type="entry name" value="ALDH_F18-19_ProA-GPR"/>
    <property type="match status" value="1"/>
</dbReference>
<dbReference type="Gene3D" id="3.40.605.10">
    <property type="entry name" value="Aldehyde Dehydrogenase, Chain A, domain 1"/>
    <property type="match status" value="1"/>
</dbReference>
<dbReference type="Gene3D" id="3.40.309.10">
    <property type="entry name" value="Aldehyde Dehydrogenase, Chain A, domain 2"/>
    <property type="match status" value="1"/>
</dbReference>
<dbReference type="HAMAP" id="MF_00412">
    <property type="entry name" value="ProA"/>
    <property type="match status" value="1"/>
</dbReference>
<dbReference type="InterPro" id="IPR016161">
    <property type="entry name" value="Ald_DH/histidinol_DH"/>
</dbReference>
<dbReference type="InterPro" id="IPR016163">
    <property type="entry name" value="Ald_DH_C"/>
</dbReference>
<dbReference type="InterPro" id="IPR016162">
    <property type="entry name" value="Ald_DH_N"/>
</dbReference>
<dbReference type="InterPro" id="IPR020593">
    <property type="entry name" value="G-glutamylP_reductase_CS"/>
</dbReference>
<dbReference type="InterPro" id="IPR012134">
    <property type="entry name" value="Glu-5-SA_DH"/>
</dbReference>
<dbReference type="InterPro" id="IPR000965">
    <property type="entry name" value="GPR_dom"/>
</dbReference>
<dbReference type="NCBIfam" id="NF001221">
    <property type="entry name" value="PRK00197.1"/>
    <property type="match status" value="1"/>
</dbReference>
<dbReference type="NCBIfam" id="TIGR00407">
    <property type="entry name" value="proA"/>
    <property type="match status" value="1"/>
</dbReference>
<dbReference type="PANTHER" id="PTHR11063:SF8">
    <property type="entry name" value="DELTA-1-PYRROLINE-5-CARBOXYLATE SYNTHASE"/>
    <property type="match status" value="1"/>
</dbReference>
<dbReference type="PANTHER" id="PTHR11063">
    <property type="entry name" value="GLUTAMATE SEMIALDEHYDE DEHYDROGENASE"/>
    <property type="match status" value="1"/>
</dbReference>
<dbReference type="PIRSF" id="PIRSF000151">
    <property type="entry name" value="GPR"/>
    <property type="match status" value="1"/>
</dbReference>
<dbReference type="SUPFAM" id="SSF53720">
    <property type="entry name" value="ALDH-like"/>
    <property type="match status" value="1"/>
</dbReference>
<dbReference type="PROSITE" id="PS01223">
    <property type="entry name" value="PROA"/>
    <property type="match status" value="1"/>
</dbReference>
<feature type="chain" id="PRO_0000189697" description="Gamma-glutamyl phosphate reductase">
    <location>
        <begin position="1"/>
        <end position="417"/>
    </location>
</feature>
<proteinExistence type="inferred from homology"/>
<gene>
    <name evidence="1" type="primary">proA</name>
    <name type="ordered locus">BT_3718</name>
</gene>
<protein>
    <recommendedName>
        <fullName evidence="1">Gamma-glutamyl phosphate reductase</fullName>
        <shortName evidence="1">GPR</shortName>
        <ecNumber evidence="1">1.2.1.41</ecNumber>
    </recommendedName>
    <alternativeName>
        <fullName evidence="1">Glutamate-5-semialdehyde dehydrogenase</fullName>
    </alternativeName>
    <alternativeName>
        <fullName evidence="1">Glutamyl-gamma-semialdehyde dehydrogenase</fullName>
        <shortName evidence="1">GSA dehydrogenase</shortName>
    </alternativeName>
</protein>